<comment type="function">
    <text evidence="2">Catalytic component of the signal peptidase complex (SPC) which catalyzes the cleavage of N-terminal signal sequences from nascent proteins as they are translocated into the lumen of the endoplasmic reticulum. Specifically cleaves N-terminal signal peptides that contain a hydrophobic alpha-helix (h-region) shorter than 18-20 amino acids.</text>
</comment>
<comment type="catalytic activity">
    <reaction evidence="2">
        <text>Cleavage of hydrophobic, N-terminal signal or leader sequences from secreted and periplasmic proteins.</text>
        <dbReference type="EC" id="3.4.21.89"/>
    </reaction>
</comment>
<comment type="subunit">
    <text evidence="2">Component of the signal peptidase complex paralog A (SPC-A) composed of a catalytic subunit SEC11A and three accessory subunits SPCS1, SPCS2 and SPCS3. Within the complex, interacts with SPCS2 and SPCS3. The complex induces a local thinning of the ER membrane which is used to measure the length of the signal peptide (SP) h-region of protein substrates. This ensures the selectivity of the complex towards h-regions shorter than 18-20 amino acids.</text>
</comment>
<comment type="subcellular location">
    <subcellularLocation>
        <location evidence="1">Endoplasmic reticulum membrane</location>
        <topology evidence="1">Single-pass type II membrane protein</topology>
    </subcellularLocation>
</comment>
<comment type="domain">
    <text evidence="2">The C-terminal short (CTS) helix is essential for catalytic activity. It may be accommodated as a transmembrane helix in the thinned membrane environment of the complex, similarly to the signal peptide in the complex substrates.</text>
</comment>
<comment type="similarity">
    <text evidence="4">Belongs to the peptidase S26B family.</text>
</comment>
<accession>P67810</accession>
<accession>A6QQV7</accession>
<accession>O75957</accession>
<accession>P21378</accession>
<gene>
    <name type="primary">SEC11A</name>
    <name type="synonym">SEC11L1</name>
    <name type="synonym">SPC18</name>
</gene>
<protein>
    <recommendedName>
        <fullName>Signal peptidase complex catalytic subunit SEC11A</fullName>
        <ecNumber evidence="2">3.4.21.89</ecNumber>
    </recommendedName>
    <alternativeName>
        <fullName>Endopeptidase SP18</fullName>
    </alternativeName>
    <alternativeName>
        <fullName>Microsomal signal peptidase 18 kDa subunit</fullName>
        <shortName>SPase 18 kDa subunit</shortName>
    </alternativeName>
    <alternativeName>
        <fullName>SEC11 homolog A</fullName>
    </alternativeName>
    <alternativeName>
        <fullName>SEC11-like protein 1</fullName>
    </alternativeName>
    <alternativeName>
        <fullName>SPC18</fullName>
    </alternativeName>
</protein>
<reference key="1">
    <citation type="journal article" date="2001" name="Anim. Genet.">
        <title>Isolation, characterization and mapping of the bovine signal peptidase subunit 18 gene.</title>
        <authorList>
            <person name="Ashwell M.S."/>
            <person name="Ashwell C.M."/>
            <person name="Garrett W.M."/>
            <person name="Bennett G.L."/>
        </authorList>
    </citation>
    <scope>NUCLEOTIDE SEQUENCE [MRNA]</scope>
</reference>
<reference key="2">
    <citation type="submission" date="2007-07" db="EMBL/GenBank/DDBJ databases">
        <authorList>
            <consortium name="NIH - Mammalian Gene Collection (MGC) project"/>
        </authorList>
    </citation>
    <scope>NUCLEOTIDE SEQUENCE [LARGE SCALE MRNA]</scope>
    <source>
        <strain>Hereford</strain>
        <tissue>Thymus</tissue>
    </source>
</reference>
<evidence type="ECO:0000250" key="1">
    <source>
        <dbReference type="UniProtKB" id="P67811"/>
    </source>
</evidence>
<evidence type="ECO:0000250" key="2">
    <source>
        <dbReference type="UniProtKB" id="P67812"/>
    </source>
</evidence>
<evidence type="ECO:0000255" key="3"/>
<evidence type="ECO:0000305" key="4"/>
<sequence>MLSLDFLDDVRRMNKRQLYYQVLNFGMIVSSALMIWKGLMVITGSESPIVVVLSGSMEPAFHRGDLLFLTNRVEDPIRVGEIVVFRIEGREIPIVHRVLKIHEKQNGHIKFLTKGDNNAVDDRGLYKQGQHWLEKKDVVGRARGFVPYIGIVTILMNDYPKFKYAVLFLLGLFVLVHRE</sequence>
<keyword id="KW-0256">Endoplasmic reticulum</keyword>
<keyword id="KW-0378">Hydrolase</keyword>
<keyword id="KW-0472">Membrane</keyword>
<keyword id="KW-0645">Protease</keyword>
<keyword id="KW-1185">Reference proteome</keyword>
<keyword id="KW-0735">Signal-anchor</keyword>
<keyword id="KW-0812">Transmembrane</keyword>
<keyword id="KW-1133">Transmembrane helix</keyword>
<feature type="chain" id="PRO_0000109541" description="Signal peptidase complex catalytic subunit SEC11A">
    <location>
        <begin position="1"/>
        <end position="179"/>
    </location>
</feature>
<feature type="topological domain" description="Cytoplasmic" evidence="1">
    <location>
        <begin position="1"/>
        <end position="16"/>
    </location>
</feature>
<feature type="transmembrane region" description="Helical; Signal-anchor for type II membrane protein" evidence="3">
    <location>
        <begin position="17"/>
        <end position="36"/>
    </location>
</feature>
<feature type="topological domain" description="Lumenal" evidence="1">
    <location>
        <begin position="37"/>
        <end position="179"/>
    </location>
</feature>
<feature type="region of interest" description="C-terminal short (CTS) helix" evidence="2">
    <location>
        <begin position="165"/>
        <end position="176"/>
    </location>
</feature>
<feature type="active site" description="Charge relay system" evidence="2">
    <location>
        <position position="56"/>
    </location>
</feature>
<feature type="active site" description="Charge relay system" evidence="2">
    <location>
        <position position="96"/>
    </location>
</feature>
<feature type="active site" description="Charge relay system" evidence="2">
    <location>
        <position position="122"/>
    </location>
</feature>
<proteinExistence type="evidence at transcript level"/>
<dbReference type="EC" id="3.4.21.89" evidence="2"/>
<dbReference type="EMBL" id="AF221669">
    <property type="protein sequence ID" value="AAF34660.1"/>
    <property type="molecule type" value="mRNA"/>
</dbReference>
<dbReference type="EMBL" id="BC150010">
    <property type="protein sequence ID" value="AAI50011.1"/>
    <property type="molecule type" value="mRNA"/>
</dbReference>
<dbReference type="RefSeq" id="NP_776890.1">
    <property type="nucleotide sequence ID" value="NM_174465.2"/>
</dbReference>
<dbReference type="SMR" id="P67810"/>
<dbReference type="FunCoup" id="P67810">
    <property type="interactions" value="2750"/>
</dbReference>
<dbReference type="STRING" id="9913.ENSBTAP00000014925"/>
<dbReference type="MEROPS" id="S26.009"/>
<dbReference type="PaxDb" id="9913-ENSBTAP00000014925"/>
<dbReference type="Ensembl" id="ENSBTAT00000014925.6">
    <property type="protein sequence ID" value="ENSBTAP00000014925.4"/>
    <property type="gene ID" value="ENSBTAG00000011239.6"/>
</dbReference>
<dbReference type="GeneID" id="282078"/>
<dbReference type="KEGG" id="bta:282078"/>
<dbReference type="CTD" id="23478"/>
<dbReference type="VEuPathDB" id="HostDB:ENSBTAG00000011239"/>
<dbReference type="VGNC" id="VGNC:53951">
    <property type="gene designation" value="SEC11A"/>
</dbReference>
<dbReference type="eggNOG" id="KOG3342">
    <property type="taxonomic scope" value="Eukaryota"/>
</dbReference>
<dbReference type="GeneTree" id="ENSGT00390000015600"/>
<dbReference type="HOGENOM" id="CLU_089996_0_0_1"/>
<dbReference type="InParanoid" id="P67810"/>
<dbReference type="OMA" id="ILMNEYP"/>
<dbReference type="OrthoDB" id="10257561at2759"/>
<dbReference type="TreeFam" id="TF313648"/>
<dbReference type="Reactome" id="R-BTA-422085">
    <property type="pathway name" value="Synthesis, secretion, and deacylation of Ghrelin"/>
</dbReference>
<dbReference type="Proteomes" id="UP000009136">
    <property type="component" value="Chromosome 21"/>
</dbReference>
<dbReference type="Bgee" id="ENSBTAG00000011239">
    <property type="expression patterns" value="Expressed in granulosa cell and 104 other cell types or tissues"/>
</dbReference>
<dbReference type="GO" id="GO:0005787">
    <property type="term" value="C:signal peptidase complex"/>
    <property type="evidence" value="ECO:0000250"/>
    <property type="project" value="UniProtKB"/>
</dbReference>
<dbReference type="GO" id="GO:0008233">
    <property type="term" value="F:peptidase activity"/>
    <property type="evidence" value="ECO:0000318"/>
    <property type="project" value="GO_Central"/>
</dbReference>
<dbReference type="GO" id="GO:0004252">
    <property type="term" value="F:serine-type endopeptidase activity"/>
    <property type="evidence" value="ECO:0000250"/>
    <property type="project" value="UniProtKB"/>
</dbReference>
<dbReference type="GO" id="GO:0006465">
    <property type="term" value="P:signal peptide processing"/>
    <property type="evidence" value="ECO:0000250"/>
    <property type="project" value="UniProtKB"/>
</dbReference>
<dbReference type="CDD" id="cd06530">
    <property type="entry name" value="S26_SPase_I"/>
    <property type="match status" value="1"/>
</dbReference>
<dbReference type="FunFam" id="2.10.109.10:FF:000003">
    <property type="entry name" value="Signal peptidase complex catalytic subunit SEC11"/>
    <property type="match status" value="1"/>
</dbReference>
<dbReference type="Gene3D" id="2.10.109.10">
    <property type="entry name" value="Umud Fragment, subunit A"/>
    <property type="match status" value="1"/>
</dbReference>
<dbReference type="InterPro" id="IPR036286">
    <property type="entry name" value="LexA/Signal_pep-like_sf"/>
</dbReference>
<dbReference type="InterPro" id="IPR019758">
    <property type="entry name" value="Pept_S26A_signal_pept_1_CS"/>
</dbReference>
<dbReference type="InterPro" id="IPR019756">
    <property type="entry name" value="Pept_S26A_signal_pept_1_Ser-AS"/>
</dbReference>
<dbReference type="InterPro" id="IPR015927">
    <property type="entry name" value="Peptidase_S24_S26A/B/C"/>
</dbReference>
<dbReference type="InterPro" id="IPR019533">
    <property type="entry name" value="Peptidase_S26"/>
</dbReference>
<dbReference type="InterPro" id="IPR001733">
    <property type="entry name" value="Peptidase_S26B"/>
</dbReference>
<dbReference type="NCBIfam" id="TIGR02228">
    <property type="entry name" value="sigpep_I_arch"/>
    <property type="match status" value="1"/>
</dbReference>
<dbReference type="PANTHER" id="PTHR10806">
    <property type="entry name" value="SIGNAL PEPTIDASE COMPLEX CATALYTIC SUBUNIT SEC11"/>
    <property type="match status" value="1"/>
</dbReference>
<dbReference type="PANTHER" id="PTHR10806:SF28">
    <property type="entry name" value="SIGNAL PEPTIDASE COMPLEX CATALYTIC SUBUNIT SEC11B-RELATED"/>
    <property type="match status" value="1"/>
</dbReference>
<dbReference type="Pfam" id="PF00717">
    <property type="entry name" value="Peptidase_S24"/>
    <property type="match status" value="1"/>
</dbReference>
<dbReference type="PRINTS" id="PR00728">
    <property type="entry name" value="SIGNALPTASE"/>
</dbReference>
<dbReference type="SUPFAM" id="SSF51306">
    <property type="entry name" value="LexA/Signal peptidase"/>
    <property type="match status" value="1"/>
</dbReference>
<dbReference type="PROSITE" id="PS00501">
    <property type="entry name" value="SPASE_I_1"/>
    <property type="match status" value="1"/>
</dbReference>
<dbReference type="PROSITE" id="PS00761">
    <property type="entry name" value="SPASE_I_3"/>
    <property type="match status" value="1"/>
</dbReference>
<organism>
    <name type="scientific">Bos taurus</name>
    <name type="common">Bovine</name>
    <dbReference type="NCBI Taxonomy" id="9913"/>
    <lineage>
        <taxon>Eukaryota</taxon>
        <taxon>Metazoa</taxon>
        <taxon>Chordata</taxon>
        <taxon>Craniata</taxon>
        <taxon>Vertebrata</taxon>
        <taxon>Euteleostomi</taxon>
        <taxon>Mammalia</taxon>
        <taxon>Eutheria</taxon>
        <taxon>Laurasiatheria</taxon>
        <taxon>Artiodactyla</taxon>
        <taxon>Ruminantia</taxon>
        <taxon>Pecora</taxon>
        <taxon>Bovidae</taxon>
        <taxon>Bovinae</taxon>
        <taxon>Bos</taxon>
    </lineage>
</organism>
<name>SC11A_BOVIN</name>